<dbReference type="EMBL" id="X68366">
    <property type="protein sequence ID" value="CAA48431.1"/>
    <property type="molecule type" value="Genomic_DNA"/>
</dbReference>
<dbReference type="PIR" id="S30307">
    <property type="entry name" value="S26442"/>
</dbReference>
<dbReference type="RefSeq" id="NP_039760.1">
    <property type="nucleotide sequence ID" value="NC_001336.1"/>
</dbReference>
<dbReference type="SMR" id="P29580"/>
<name>YPV6_METTF</name>
<feature type="chain" id="PRO_0000066430" description="Uncharacterized protein ORF6">
    <location>
        <begin position="1"/>
        <end position="122"/>
    </location>
</feature>
<accession>P29580</accession>
<organism>
    <name type="scientific">Methanothermobacter thermautotrophicus</name>
    <name type="common">Methanobacterium thermoformicicum</name>
    <dbReference type="NCBI Taxonomy" id="145262"/>
    <lineage>
        <taxon>Archaea</taxon>
        <taxon>Methanobacteriati</taxon>
        <taxon>Methanobacteriota</taxon>
        <taxon>Methanomada group</taxon>
        <taxon>Methanobacteria</taxon>
        <taxon>Methanobacteriales</taxon>
        <taxon>Methanobacteriaceae</taxon>
        <taxon>Methanothermobacter</taxon>
    </lineage>
</organism>
<sequence length="122" mass="14469">MRQIAEMRKEVSQHGFDVRMMEVPGMKVAIAGDGEVNYLFMLLPFRDKFKLKKRDVWLFKKLSYKFKARPFLVTFDKMLSFYPLHALEEGGEHFELDIRNSRGLMFSFDTIVSEQLQQRLVV</sequence>
<proteinExistence type="predicted"/>
<reference key="1">
    <citation type="journal article" date="1992" name="Nucleic Acids Res.">
        <title>Modular organization of related Archaeal plasmids encoding different restriction-modification systems in Methanobacterium thermoformicicum.</title>
        <authorList>
            <person name="Noelling J."/>
            <person name="van Eeden F.J.M."/>
            <person name="Eggen R.I.L."/>
            <person name="de Vos W.M."/>
        </authorList>
    </citation>
    <scope>NUCLEOTIDE SEQUENCE [GENOMIC DNA]</scope>
    <source>
        <strain>DSM 3848 / THF</strain>
    </source>
</reference>
<protein>
    <recommendedName>
        <fullName>Uncharacterized protein ORF6</fullName>
    </recommendedName>
</protein>
<geneLocation type="plasmid">
    <name>pFV1</name>
</geneLocation>
<keyword id="KW-0614">Plasmid</keyword>